<reference key="1">
    <citation type="journal article" date="2003" name="Proc. Natl. Acad. Sci. U.S.A.">
        <title>The complete genome sequence of Mycobacterium bovis.</title>
        <authorList>
            <person name="Garnier T."/>
            <person name="Eiglmeier K."/>
            <person name="Camus J.-C."/>
            <person name="Medina N."/>
            <person name="Mansoor H."/>
            <person name="Pryor M."/>
            <person name="Duthoy S."/>
            <person name="Grondin S."/>
            <person name="Lacroix C."/>
            <person name="Monsempe C."/>
            <person name="Simon S."/>
            <person name="Harris B."/>
            <person name="Atkin R."/>
            <person name="Doggett J."/>
            <person name="Mayes R."/>
            <person name="Keating L."/>
            <person name="Wheeler P.R."/>
            <person name="Parkhill J."/>
            <person name="Barrell B.G."/>
            <person name="Cole S.T."/>
            <person name="Gordon S.V."/>
            <person name="Hewinson R.G."/>
        </authorList>
    </citation>
    <scope>NUCLEOTIDE SEQUENCE [LARGE SCALE GENOMIC DNA]</scope>
    <source>
        <strain>ATCC BAA-935 / AF2122/97</strain>
    </source>
</reference>
<reference key="2">
    <citation type="journal article" date="2017" name="Genome Announc.">
        <title>Updated reference genome sequence and annotation of Mycobacterium bovis AF2122/97.</title>
        <authorList>
            <person name="Malone K.M."/>
            <person name="Farrell D."/>
            <person name="Stuber T.P."/>
            <person name="Schubert O.T."/>
            <person name="Aebersold R."/>
            <person name="Robbe-Austerman S."/>
            <person name="Gordon S.V."/>
        </authorList>
    </citation>
    <scope>NUCLEOTIDE SEQUENCE [LARGE SCALE GENOMIC DNA]</scope>
    <scope>GENOME REANNOTATION</scope>
    <source>
        <strain>ATCC BAA-935 / AF2122/97</strain>
    </source>
</reference>
<gene>
    <name evidence="1" type="primary">ispH2</name>
    <name type="synonym">lytB2</name>
    <name type="ordered locus">BQ2027_MB3414C</name>
</gene>
<feature type="chain" id="PRO_0000128837" description="4-hydroxy-3-methylbut-2-enyl diphosphate reductase 2">
    <location>
        <begin position="1"/>
        <end position="329"/>
    </location>
</feature>
<feature type="active site" description="Proton donor" evidence="1">
    <location>
        <position position="147"/>
    </location>
</feature>
<feature type="binding site" evidence="1">
    <location>
        <position position="29"/>
    </location>
    <ligand>
        <name>[4Fe-4S] cluster</name>
        <dbReference type="ChEBI" id="CHEBI:49883"/>
    </ligand>
</feature>
<feature type="binding site" evidence="1">
    <location>
        <position position="58"/>
    </location>
    <ligand>
        <name>(2E)-4-hydroxy-3-methylbut-2-enyl diphosphate</name>
        <dbReference type="ChEBI" id="CHEBI:128753"/>
    </ligand>
</feature>
<feature type="binding site" evidence="1">
    <location>
        <position position="58"/>
    </location>
    <ligand>
        <name>dimethylallyl diphosphate</name>
        <dbReference type="ChEBI" id="CHEBI:57623"/>
    </ligand>
</feature>
<feature type="binding site" evidence="1">
    <location>
        <position position="58"/>
    </location>
    <ligand>
        <name>isopentenyl diphosphate</name>
        <dbReference type="ChEBI" id="CHEBI:128769"/>
    </ligand>
</feature>
<feature type="binding site" evidence="1">
    <location>
        <position position="95"/>
    </location>
    <ligand>
        <name>(2E)-4-hydroxy-3-methylbut-2-enyl diphosphate</name>
        <dbReference type="ChEBI" id="CHEBI:128753"/>
    </ligand>
</feature>
<feature type="binding site" evidence="1">
    <location>
        <position position="95"/>
    </location>
    <ligand>
        <name>dimethylallyl diphosphate</name>
        <dbReference type="ChEBI" id="CHEBI:57623"/>
    </ligand>
</feature>
<feature type="binding site" evidence="1">
    <location>
        <position position="95"/>
    </location>
    <ligand>
        <name>isopentenyl diphosphate</name>
        <dbReference type="ChEBI" id="CHEBI:128769"/>
    </ligand>
</feature>
<feature type="binding site" evidence="1">
    <location>
        <position position="117"/>
    </location>
    <ligand>
        <name>[4Fe-4S] cluster</name>
        <dbReference type="ChEBI" id="CHEBI:49883"/>
    </ligand>
</feature>
<feature type="binding site" evidence="1">
    <location>
        <position position="145"/>
    </location>
    <ligand>
        <name>(2E)-4-hydroxy-3-methylbut-2-enyl diphosphate</name>
        <dbReference type="ChEBI" id="CHEBI:128753"/>
    </ligand>
</feature>
<feature type="binding site" evidence="1">
    <location>
        <position position="145"/>
    </location>
    <ligand>
        <name>dimethylallyl diphosphate</name>
        <dbReference type="ChEBI" id="CHEBI:57623"/>
    </ligand>
</feature>
<feature type="binding site" evidence="1">
    <location>
        <position position="145"/>
    </location>
    <ligand>
        <name>isopentenyl diphosphate</name>
        <dbReference type="ChEBI" id="CHEBI:128769"/>
    </ligand>
</feature>
<feature type="binding site" evidence="1">
    <location>
        <position position="185"/>
    </location>
    <ligand>
        <name>(2E)-4-hydroxy-3-methylbut-2-enyl diphosphate</name>
        <dbReference type="ChEBI" id="CHEBI:128753"/>
    </ligand>
</feature>
<feature type="binding site" evidence="1">
    <location>
        <position position="215"/>
    </location>
    <ligand>
        <name>[4Fe-4S] cluster</name>
        <dbReference type="ChEBI" id="CHEBI:49883"/>
    </ligand>
</feature>
<feature type="binding site" evidence="1">
    <location>
        <position position="243"/>
    </location>
    <ligand>
        <name>(2E)-4-hydroxy-3-methylbut-2-enyl diphosphate</name>
        <dbReference type="ChEBI" id="CHEBI:128753"/>
    </ligand>
</feature>
<feature type="binding site" evidence="1">
    <location>
        <position position="243"/>
    </location>
    <ligand>
        <name>dimethylallyl diphosphate</name>
        <dbReference type="ChEBI" id="CHEBI:57623"/>
    </ligand>
</feature>
<feature type="binding site" evidence="1">
    <location>
        <position position="243"/>
    </location>
    <ligand>
        <name>isopentenyl diphosphate</name>
        <dbReference type="ChEBI" id="CHEBI:128769"/>
    </ligand>
</feature>
<feature type="binding site" evidence="1">
    <location>
        <position position="244"/>
    </location>
    <ligand>
        <name>(2E)-4-hydroxy-3-methylbut-2-enyl diphosphate</name>
        <dbReference type="ChEBI" id="CHEBI:128753"/>
    </ligand>
</feature>
<feature type="binding site" evidence="1">
    <location>
        <position position="244"/>
    </location>
    <ligand>
        <name>dimethylallyl diphosphate</name>
        <dbReference type="ChEBI" id="CHEBI:57623"/>
    </ligand>
</feature>
<feature type="binding site" evidence="1">
    <location>
        <position position="244"/>
    </location>
    <ligand>
        <name>isopentenyl diphosphate</name>
        <dbReference type="ChEBI" id="CHEBI:128769"/>
    </ligand>
</feature>
<feature type="binding site" evidence="1">
    <location>
        <position position="245"/>
    </location>
    <ligand>
        <name>(2E)-4-hydroxy-3-methylbut-2-enyl diphosphate</name>
        <dbReference type="ChEBI" id="CHEBI:128753"/>
    </ligand>
</feature>
<feature type="binding site" evidence="1">
    <location>
        <position position="245"/>
    </location>
    <ligand>
        <name>dimethylallyl diphosphate</name>
        <dbReference type="ChEBI" id="CHEBI:57623"/>
    </ligand>
</feature>
<feature type="binding site" evidence="1">
    <location>
        <position position="245"/>
    </location>
    <ligand>
        <name>isopentenyl diphosphate</name>
        <dbReference type="ChEBI" id="CHEBI:128769"/>
    </ligand>
</feature>
<feature type="binding site" evidence="1">
    <location>
        <position position="287"/>
    </location>
    <ligand>
        <name>(2E)-4-hydroxy-3-methylbut-2-enyl diphosphate</name>
        <dbReference type="ChEBI" id="CHEBI:128753"/>
    </ligand>
</feature>
<feature type="binding site" evidence="1">
    <location>
        <position position="287"/>
    </location>
    <ligand>
        <name>dimethylallyl diphosphate</name>
        <dbReference type="ChEBI" id="CHEBI:57623"/>
    </ligand>
</feature>
<feature type="binding site" evidence="1">
    <location>
        <position position="287"/>
    </location>
    <ligand>
        <name>isopentenyl diphosphate</name>
        <dbReference type="ChEBI" id="CHEBI:128769"/>
    </ligand>
</feature>
<organism>
    <name type="scientific">Mycobacterium bovis (strain ATCC BAA-935 / AF2122/97)</name>
    <dbReference type="NCBI Taxonomy" id="233413"/>
    <lineage>
        <taxon>Bacteria</taxon>
        <taxon>Bacillati</taxon>
        <taxon>Actinomycetota</taxon>
        <taxon>Actinomycetes</taxon>
        <taxon>Mycobacteriales</taxon>
        <taxon>Mycobacteriaceae</taxon>
        <taxon>Mycobacterium</taxon>
        <taxon>Mycobacterium tuberculosis complex</taxon>
    </lineage>
</organism>
<proteinExistence type="inferred from homology"/>
<comment type="function">
    <text evidence="1">Catalyzes the conversion of 1-hydroxy-2-methyl-2-(E)-butenyl 4-diphosphate (HMBPP) into a mixture of isopentenyl diphosphate (IPP) and dimethylallyl diphosphate (DMAPP). Acts in the terminal step of the DOXP/MEP pathway for isoprenoid precursor biosynthesis.</text>
</comment>
<comment type="catalytic activity">
    <reaction evidence="1">
        <text>isopentenyl diphosphate + 2 oxidized [2Fe-2S]-[ferredoxin] + H2O = (2E)-4-hydroxy-3-methylbut-2-enyl diphosphate + 2 reduced [2Fe-2S]-[ferredoxin] + 2 H(+)</text>
        <dbReference type="Rhea" id="RHEA:24488"/>
        <dbReference type="Rhea" id="RHEA-COMP:10000"/>
        <dbReference type="Rhea" id="RHEA-COMP:10001"/>
        <dbReference type="ChEBI" id="CHEBI:15377"/>
        <dbReference type="ChEBI" id="CHEBI:15378"/>
        <dbReference type="ChEBI" id="CHEBI:33737"/>
        <dbReference type="ChEBI" id="CHEBI:33738"/>
        <dbReference type="ChEBI" id="CHEBI:128753"/>
        <dbReference type="ChEBI" id="CHEBI:128769"/>
        <dbReference type="EC" id="1.17.7.4"/>
    </reaction>
</comment>
<comment type="catalytic activity">
    <reaction evidence="1">
        <text>dimethylallyl diphosphate + 2 oxidized [2Fe-2S]-[ferredoxin] + H2O = (2E)-4-hydroxy-3-methylbut-2-enyl diphosphate + 2 reduced [2Fe-2S]-[ferredoxin] + 2 H(+)</text>
        <dbReference type="Rhea" id="RHEA:24825"/>
        <dbReference type="Rhea" id="RHEA-COMP:10000"/>
        <dbReference type="Rhea" id="RHEA-COMP:10001"/>
        <dbReference type="ChEBI" id="CHEBI:15377"/>
        <dbReference type="ChEBI" id="CHEBI:15378"/>
        <dbReference type="ChEBI" id="CHEBI:33737"/>
        <dbReference type="ChEBI" id="CHEBI:33738"/>
        <dbReference type="ChEBI" id="CHEBI:57623"/>
        <dbReference type="ChEBI" id="CHEBI:128753"/>
        <dbReference type="EC" id="1.17.7.4"/>
    </reaction>
</comment>
<comment type="cofactor">
    <cofactor evidence="1">
        <name>[4Fe-4S] cluster</name>
        <dbReference type="ChEBI" id="CHEBI:49883"/>
    </cofactor>
    <text evidence="1">Binds 1 [4Fe-4S] cluster per subunit.</text>
</comment>
<comment type="pathway">
    <text evidence="1">Isoprenoid biosynthesis; dimethylallyl diphosphate biosynthesis; dimethylallyl diphosphate from (2E)-4-hydroxy-3-methylbutenyl diphosphate: step 1/1.</text>
</comment>
<comment type="pathway">
    <text evidence="1">Isoprenoid biosynthesis; isopentenyl diphosphate biosynthesis via DXP pathway; isopentenyl diphosphate from 1-deoxy-D-xylulose 5-phosphate: step 6/6.</text>
</comment>
<comment type="similarity">
    <text evidence="1">Belongs to the IspH family.</text>
</comment>
<keyword id="KW-0004">4Fe-4S</keyword>
<keyword id="KW-0408">Iron</keyword>
<keyword id="KW-0411">Iron-sulfur</keyword>
<keyword id="KW-0414">Isoprene biosynthesis</keyword>
<keyword id="KW-0479">Metal-binding</keyword>
<keyword id="KW-0560">Oxidoreductase</keyword>
<keyword id="KW-1185">Reference proteome</keyword>
<evidence type="ECO:0000255" key="1">
    <source>
        <dbReference type="HAMAP-Rule" id="MF_00191"/>
    </source>
</evidence>
<name>ISPH2_MYCBO</name>
<protein>
    <recommendedName>
        <fullName evidence="1">4-hydroxy-3-methylbut-2-enyl diphosphate reductase 2</fullName>
        <shortName evidence="1">HMBPP reductase 2</shortName>
        <ecNumber evidence="1">1.17.7.4</ecNumber>
    </recommendedName>
</protein>
<sequence>MAEVFVGPVAQGYASGEVTVLLASPRSFCAGVERAIETVKRVLDVAEGPVYVRKQIVHNTVVVAELRDRGAVFVEDLDEIPDPPPPGAVVVFSAHGVSPAVRAGADERGLQVVDATCPLVAKVHAEAARFAARGDTVVFIGHAGHEETEGTLGVAPRSTLLVQTPADVAALNLPEGTQLSYLTQTTLALDETADVIDALRARFPTLGQPPSEDICYATTNRQRALQSMVGECDVVLVIGSCNSSNSRRLVELAQRSGTPAYLIDGPDDIEPEWLSSVSTIGVTAGASAPPRLVGQVIDALRGYASITVVERSIATETVRFGLPKQVRAQ</sequence>
<accession>P0A5I3</accession>
<accession>A0A1R3Y415</accession>
<accession>O50409</accession>
<accession>X2BPD5</accession>
<dbReference type="EC" id="1.17.7.4" evidence="1"/>
<dbReference type="EMBL" id="LT708304">
    <property type="protein sequence ID" value="SIU02043.1"/>
    <property type="molecule type" value="Genomic_DNA"/>
</dbReference>
<dbReference type="RefSeq" id="NP_857055.1">
    <property type="nucleotide sequence ID" value="NC_002945.3"/>
</dbReference>
<dbReference type="SMR" id="P0A5I3"/>
<dbReference type="KEGG" id="mbo:BQ2027_MB3414C"/>
<dbReference type="PATRIC" id="fig|233413.5.peg.3750"/>
<dbReference type="UniPathway" id="UPA00056">
    <property type="reaction ID" value="UER00097"/>
</dbReference>
<dbReference type="UniPathway" id="UPA00059">
    <property type="reaction ID" value="UER00105"/>
</dbReference>
<dbReference type="Proteomes" id="UP000001419">
    <property type="component" value="Chromosome"/>
</dbReference>
<dbReference type="GO" id="GO:0051539">
    <property type="term" value="F:4 iron, 4 sulfur cluster binding"/>
    <property type="evidence" value="ECO:0007669"/>
    <property type="project" value="UniProtKB-UniRule"/>
</dbReference>
<dbReference type="GO" id="GO:0051745">
    <property type="term" value="F:4-hydroxy-3-methylbut-2-enyl diphosphate reductase activity"/>
    <property type="evidence" value="ECO:0007669"/>
    <property type="project" value="UniProtKB-UniRule"/>
</dbReference>
<dbReference type="GO" id="GO:0046872">
    <property type="term" value="F:metal ion binding"/>
    <property type="evidence" value="ECO:0007669"/>
    <property type="project" value="UniProtKB-KW"/>
</dbReference>
<dbReference type="GO" id="GO:0050992">
    <property type="term" value="P:dimethylallyl diphosphate biosynthetic process"/>
    <property type="evidence" value="ECO:0007669"/>
    <property type="project" value="UniProtKB-UniRule"/>
</dbReference>
<dbReference type="GO" id="GO:0019288">
    <property type="term" value="P:isopentenyl diphosphate biosynthetic process, methylerythritol 4-phosphate pathway"/>
    <property type="evidence" value="ECO:0007669"/>
    <property type="project" value="UniProtKB-UniRule"/>
</dbReference>
<dbReference type="GO" id="GO:0016114">
    <property type="term" value="P:terpenoid biosynthetic process"/>
    <property type="evidence" value="ECO:0007669"/>
    <property type="project" value="UniProtKB-UniRule"/>
</dbReference>
<dbReference type="CDD" id="cd13944">
    <property type="entry name" value="lytB_ispH"/>
    <property type="match status" value="1"/>
</dbReference>
<dbReference type="Gene3D" id="3.40.50.11270">
    <property type="match status" value="1"/>
</dbReference>
<dbReference type="Gene3D" id="3.40.1010.20">
    <property type="entry name" value="4-hydroxy-3-methylbut-2-enyl diphosphate reductase, catalytic domain"/>
    <property type="match status" value="2"/>
</dbReference>
<dbReference type="HAMAP" id="MF_00191">
    <property type="entry name" value="IspH"/>
    <property type="match status" value="1"/>
</dbReference>
<dbReference type="InterPro" id="IPR003451">
    <property type="entry name" value="LytB/IspH"/>
</dbReference>
<dbReference type="NCBIfam" id="TIGR00216">
    <property type="entry name" value="ispH_lytB"/>
    <property type="match status" value="1"/>
</dbReference>
<dbReference type="NCBIfam" id="NF002190">
    <property type="entry name" value="PRK01045.1-4"/>
    <property type="match status" value="1"/>
</dbReference>
<dbReference type="PANTHER" id="PTHR30426">
    <property type="entry name" value="4-HYDROXY-3-METHYLBUT-2-ENYL DIPHOSPHATE REDUCTASE"/>
    <property type="match status" value="1"/>
</dbReference>
<dbReference type="PANTHER" id="PTHR30426:SF0">
    <property type="entry name" value="4-HYDROXY-3-METHYLBUT-2-ENYL DIPHOSPHATE REDUCTASE"/>
    <property type="match status" value="1"/>
</dbReference>
<dbReference type="Pfam" id="PF02401">
    <property type="entry name" value="LYTB"/>
    <property type="match status" value="1"/>
</dbReference>